<gene>
    <name evidence="1" type="primary">gatC</name>
    <name type="ordered locus">BARBAKC583_0836</name>
</gene>
<evidence type="ECO:0000255" key="1">
    <source>
        <dbReference type="HAMAP-Rule" id="MF_00122"/>
    </source>
</evidence>
<reference key="1">
    <citation type="submission" date="2006-12" db="EMBL/GenBank/DDBJ databases">
        <authorList>
            <person name="Hendrix L."/>
            <person name="Mohamoud Y."/>
            <person name="Radune D."/>
            <person name="Shvartsbeyn A."/>
            <person name="Daugherty S."/>
            <person name="Dodson R."/>
            <person name="Durkin A.S."/>
            <person name="Harkins D."/>
            <person name="Huot H."/>
            <person name="Kothari S.P."/>
            <person name="Madupu R."/>
            <person name="Li J."/>
            <person name="Nelson W.C."/>
            <person name="Shrivastava S."/>
            <person name="Giglio M.G."/>
            <person name="Haft D."/>
            <person name="Selengut J."/>
            <person name="Fraser-Ligget C."/>
            <person name="Seshadri R."/>
        </authorList>
    </citation>
    <scope>NUCLEOTIDE SEQUENCE [LARGE SCALE GENOMIC DNA]</scope>
    <source>
        <strain>ATCC 35685 / KC583 / Herrer 020/F12,63</strain>
    </source>
</reference>
<name>GATC_BARBK</name>
<feature type="chain" id="PRO_1000016073" description="Aspartyl/glutamyl-tRNA(Asn/Gln) amidotransferase subunit C">
    <location>
        <begin position="1"/>
        <end position="95"/>
    </location>
</feature>
<organism>
    <name type="scientific">Bartonella bacilliformis (strain ATCC 35685 / KC583 / Herrer 020/F12,63)</name>
    <dbReference type="NCBI Taxonomy" id="360095"/>
    <lineage>
        <taxon>Bacteria</taxon>
        <taxon>Pseudomonadati</taxon>
        <taxon>Pseudomonadota</taxon>
        <taxon>Alphaproteobacteria</taxon>
        <taxon>Hyphomicrobiales</taxon>
        <taxon>Bartonellaceae</taxon>
        <taxon>Bartonella</taxon>
    </lineage>
</organism>
<protein>
    <recommendedName>
        <fullName evidence="1">Aspartyl/glutamyl-tRNA(Asn/Gln) amidotransferase subunit C</fullName>
        <shortName evidence="1">Asp/Glu-ADT subunit C</shortName>
        <ecNumber evidence="1">6.3.5.-</ecNumber>
    </recommendedName>
</protein>
<dbReference type="EC" id="6.3.5.-" evidence="1"/>
<dbReference type="EMBL" id="CP000524">
    <property type="protein sequence ID" value="ABM44677.1"/>
    <property type="molecule type" value="Genomic_DNA"/>
</dbReference>
<dbReference type="RefSeq" id="WP_005767186.1">
    <property type="nucleotide sequence ID" value="NC_008783.1"/>
</dbReference>
<dbReference type="SMR" id="A1UT21"/>
<dbReference type="STRING" id="360095.BARBAKC583_0836"/>
<dbReference type="GeneID" id="4684472"/>
<dbReference type="KEGG" id="bbk:BARBAKC583_0836"/>
<dbReference type="PATRIC" id="fig|360095.6.peg.812"/>
<dbReference type="eggNOG" id="COG0721">
    <property type="taxonomic scope" value="Bacteria"/>
</dbReference>
<dbReference type="HOGENOM" id="CLU_105899_2_0_5"/>
<dbReference type="OrthoDB" id="9794326at2"/>
<dbReference type="Proteomes" id="UP000000643">
    <property type="component" value="Chromosome"/>
</dbReference>
<dbReference type="GO" id="GO:0050566">
    <property type="term" value="F:asparaginyl-tRNA synthase (glutamine-hydrolyzing) activity"/>
    <property type="evidence" value="ECO:0007669"/>
    <property type="project" value="RHEA"/>
</dbReference>
<dbReference type="GO" id="GO:0005524">
    <property type="term" value="F:ATP binding"/>
    <property type="evidence" value="ECO:0007669"/>
    <property type="project" value="UniProtKB-KW"/>
</dbReference>
<dbReference type="GO" id="GO:0050567">
    <property type="term" value="F:glutaminyl-tRNA synthase (glutamine-hydrolyzing) activity"/>
    <property type="evidence" value="ECO:0007669"/>
    <property type="project" value="UniProtKB-UniRule"/>
</dbReference>
<dbReference type="GO" id="GO:0070681">
    <property type="term" value="P:glutaminyl-tRNAGln biosynthesis via transamidation"/>
    <property type="evidence" value="ECO:0007669"/>
    <property type="project" value="TreeGrafter"/>
</dbReference>
<dbReference type="GO" id="GO:0006450">
    <property type="term" value="P:regulation of translational fidelity"/>
    <property type="evidence" value="ECO:0007669"/>
    <property type="project" value="InterPro"/>
</dbReference>
<dbReference type="GO" id="GO:0006412">
    <property type="term" value="P:translation"/>
    <property type="evidence" value="ECO:0007669"/>
    <property type="project" value="UniProtKB-UniRule"/>
</dbReference>
<dbReference type="Gene3D" id="1.10.20.60">
    <property type="entry name" value="Glu-tRNAGln amidotransferase C subunit, N-terminal domain"/>
    <property type="match status" value="1"/>
</dbReference>
<dbReference type="HAMAP" id="MF_00122">
    <property type="entry name" value="GatC"/>
    <property type="match status" value="1"/>
</dbReference>
<dbReference type="InterPro" id="IPR036113">
    <property type="entry name" value="Asp/Glu-ADT_sf_sub_c"/>
</dbReference>
<dbReference type="InterPro" id="IPR003837">
    <property type="entry name" value="GatC"/>
</dbReference>
<dbReference type="NCBIfam" id="TIGR00135">
    <property type="entry name" value="gatC"/>
    <property type="match status" value="1"/>
</dbReference>
<dbReference type="PANTHER" id="PTHR15004">
    <property type="entry name" value="GLUTAMYL-TRNA(GLN) AMIDOTRANSFERASE SUBUNIT C, MITOCHONDRIAL"/>
    <property type="match status" value="1"/>
</dbReference>
<dbReference type="PANTHER" id="PTHR15004:SF0">
    <property type="entry name" value="GLUTAMYL-TRNA(GLN) AMIDOTRANSFERASE SUBUNIT C, MITOCHONDRIAL"/>
    <property type="match status" value="1"/>
</dbReference>
<dbReference type="Pfam" id="PF02686">
    <property type="entry name" value="GatC"/>
    <property type="match status" value="1"/>
</dbReference>
<dbReference type="SUPFAM" id="SSF141000">
    <property type="entry name" value="Glu-tRNAGln amidotransferase C subunit"/>
    <property type="match status" value="1"/>
</dbReference>
<sequence>MSVNDKTIKRIAHLARIAIHDNETERITKKFNAILDFAKQLDEIDVTGVDPLISVIPMTLRTREDSITDGNKAADIVANAPVTEENFFLVSKIVE</sequence>
<keyword id="KW-0067">ATP-binding</keyword>
<keyword id="KW-0436">Ligase</keyword>
<keyword id="KW-0547">Nucleotide-binding</keyword>
<keyword id="KW-0648">Protein biosynthesis</keyword>
<proteinExistence type="inferred from homology"/>
<accession>A1UT21</accession>
<comment type="function">
    <text evidence="1">Allows the formation of correctly charged Asn-tRNA(Asn) or Gln-tRNA(Gln) through the transamidation of misacylated Asp-tRNA(Asn) or Glu-tRNA(Gln) in organisms which lack either or both of asparaginyl-tRNA or glutaminyl-tRNA synthetases. The reaction takes place in the presence of glutamine and ATP through an activated phospho-Asp-tRNA(Asn) or phospho-Glu-tRNA(Gln).</text>
</comment>
<comment type="catalytic activity">
    <reaction evidence="1">
        <text>L-glutamyl-tRNA(Gln) + L-glutamine + ATP + H2O = L-glutaminyl-tRNA(Gln) + L-glutamate + ADP + phosphate + H(+)</text>
        <dbReference type="Rhea" id="RHEA:17521"/>
        <dbReference type="Rhea" id="RHEA-COMP:9681"/>
        <dbReference type="Rhea" id="RHEA-COMP:9684"/>
        <dbReference type="ChEBI" id="CHEBI:15377"/>
        <dbReference type="ChEBI" id="CHEBI:15378"/>
        <dbReference type="ChEBI" id="CHEBI:29985"/>
        <dbReference type="ChEBI" id="CHEBI:30616"/>
        <dbReference type="ChEBI" id="CHEBI:43474"/>
        <dbReference type="ChEBI" id="CHEBI:58359"/>
        <dbReference type="ChEBI" id="CHEBI:78520"/>
        <dbReference type="ChEBI" id="CHEBI:78521"/>
        <dbReference type="ChEBI" id="CHEBI:456216"/>
    </reaction>
</comment>
<comment type="catalytic activity">
    <reaction evidence="1">
        <text>L-aspartyl-tRNA(Asn) + L-glutamine + ATP + H2O = L-asparaginyl-tRNA(Asn) + L-glutamate + ADP + phosphate + 2 H(+)</text>
        <dbReference type="Rhea" id="RHEA:14513"/>
        <dbReference type="Rhea" id="RHEA-COMP:9674"/>
        <dbReference type="Rhea" id="RHEA-COMP:9677"/>
        <dbReference type="ChEBI" id="CHEBI:15377"/>
        <dbReference type="ChEBI" id="CHEBI:15378"/>
        <dbReference type="ChEBI" id="CHEBI:29985"/>
        <dbReference type="ChEBI" id="CHEBI:30616"/>
        <dbReference type="ChEBI" id="CHEBI:43474"/>
        <dbReference type="ChEBI" id="CHEBI:58359"/>
        <dbReference type="ChEBI" id="CHEBI:78515"/>
        <dbReference type="ChEBI" id="CHEBI:78516"/>
        <dbReference type="ChEBI" id="CHEBI:456216"/>
    </reaction>
</comment>
<comment type="subunit">
    <text evidence="1">Heterotrimer of A, B and C subunits.</text>
</comment>
<comment type="similarity">
    <text evidence="1">Belongs to the GatC family.</text>
</comment>